<reference key="1">
    <citation type="journal article" date="2004" name="Genome Res.">
        <title>The status, quality, and expansion of the NIH full-length cDNA project: the Mammalian Gene Collection (MGC).</title>
        <authorList>
            <consortium name="The MGC Project Team"/>
        </authorList>
    </citation>
    <scope>NUCLEOTIDE SEQUENCE [LARGE SCALE MRNA]</scope>
    <source>
        <tissue>Placenta</tissue>
    </source>
</reference>
<reference key="2">
    <citation type="journal article" date="2000" name="Mol. Cell. Biol.">
        <title>A novel TATA-binding protein-binding protein, ABT1, activates basal transcription and has a yeast homolog that is essential for growth.</title>
        <authorList>
            <person name="Oda T."/>
            <person name="Kayukawa K."/>
            <person name="Hagiwara H."/>
            <person name="Yudate H.T."/>
            <person name="Masuho Y."/>
            <person name="Murakami Y."/>
            <person name="Tamura T.-A."/>
            <person name="Muramatsu M.-A."/>
        </authorList>
    </citation>
    <scope>INTERACTION WITH ESF1</scope>
</reference>
<name>ABT1_RAT</name>
<keyword id="KW-0175">Coiled coil</keyword>
<keyword id="KW-0238">DNA-binding</keyword>
<keyword id="KW-0539">Nucleus</keyword>
<keyword id="KW-1185">Reference proteome</keyword>
<keyword id="KW-0694">RNA-binding</keyword>
<keyword id="KW-0804">Transcription</keyword>
<keyword id="KW-0805">Transcription regulation</keyword>
<proteinExistence type="evidence at protein level"/>
<gene>
    <name type="primary">Abt1</name>
</gene>
<sequence length="268" mass="30620">MVKVGKLVEEQKAAMEEEKEVNAEAAEELEEAEEASCNGSKKKVVPGIVYLGHVPPRFRPLHVRNLLSVYGEVGRVFFQAEDPFVRRKKKAAAAAGGKKGAKYSKDYTEGWVEFRDKRIAKRVAASLHNTPMGARKRSPFRYDLWNLKYLHRFTWSHLSEHLAFERQVRRQRLRAEVAQAKRETDFYLRNVEQGQRFLAADGDATRPNSSWTFTQRPTEQELRAQKGARPGGRERARLATVQDQARSNRGLLARIFGASLLAESRKEP</sequence>
<comment type="function">
    <text evidence="1">May be a novel TATA-binding protein (TBP) which can function as a basal transcription activator. Can act as a regulator of basal transcription for class II genes (By similarity).</text>
</comment>
<comment type="subunit">
    <text evidence="1 4">Interacts with IGHMBP2 (By similarity). Interacts with ESF1/ABTAP.</text>
</comment>
<comment type="subcellular location">
    <subcellularLocation>
        <location evidence="1">Nucleus</location>
    </subcellularLocation>
    <subcellularLocation>
        <location evidence="1">Nucleus</location>
        <location evidence="1">Nucleolus</location>
    </subcellularLocation>
</comment>
<comment type="similarity">
    <text evidence="5">Belongs to the ESF2/ABP1 family.</text>
</comment>
<dbReference type="EMBL" id="BC099109">
    <property type="protein sequence ID" value="AAH99109.1"/>
    <property type="molecule type" value="mRNA"/>
</dbReference>
<dbReference type="RefSeq" id="NP_001020845.1">
    <property type="nucleotide sequence ID" value="NM_001025674.1"/>
</dbReference>
<dbReference type="FunCoup" id="Q4KLM5">
    <property type="interactions" value="3335"/>
</dbReference>
<dbReference type="STRING" id="10116.ENSRNOP00000023648"/>
<dbReference type="PhosphoSitePlus" id="Q4KLM5"/>
<dbReference type="PaxDb" id="10116-ENSRNOP00000023648"/>
<dbReference type="Ensembl" id="ENSRNOT00000023649.6">
    <property type="protein sequence ID" value="ENSRNOP00000023648.4"/>
    <property type="gene ID" value="ENSRNOG00000017585.6"/>
</dbReference>
<dbReference type="GeneID" id="306960"/>
<dbReference type="KEGG" id="rno:306960"/>
<dbReference type="UCSC" id="RGD:1310785">
    <property type="organism name" value="rat"/>
</dbReference>
<dbReference type="AGR" id="RGD:1310785"/>
<dbReference type="CTD" id="29777"/>
<dbReference type="RGD" id="1310785">
    <property type="gene designation" value="Abt1"/>
</dbReference>
<dbReference type="eggNOG" id="KOG3152">
    <property type="taxonomic scope" value="Eukaryota"/>
</dbReference>
<dbReference type="GeneTree" id="ENSGT00390000002062"/>
<dbReference type="HOGENOM" id="CLU_054086_3_1_1"/>
<dbReference type="InParanoid" id="Q4KLM5"/>
<dbReference type="OMA" id="FKWIHLV"/>
<dbReference type="OrthoDB" id="287393at2759"/>
<dbReference type="PhylomeDB" id="Q4KLM5"/>
<dbReference type="TreeFam" id="TF314506"/>
<dbReference type="PRO" id="PR:Q4KLM5"/>
<dbReference type="Proteomes" id="UP000002494">
    <property type="component" value="Chromosome 17"/>
</dbReference>
<dbReference type="Bgee" id="ENSRNOG00000017585">
    <property type="expression patterns" value="Expressed in thymus and 20 other cell types or tissues"/>
</dbReference>
<dbReference type="GO" id="GO:0005730">
    <property type="term" value="C:nucleolus"/>
    <property type="evidence" value="ECO:0000318"/>
    <property type="project" value="GO_Central"/>
</dbReference>
<dbReference type="GO" id="GO:0005667">
    <property type="term" value="C:transcription regulator complex"/>
    <property type="evidence" value="ECO:0000266"/>
    <property type="project" value="RGD"/>
</dbReference>
<dbReference type="GO" id="GO:0003677">
    <property type="term" value="F:DNA binding"/>
    <property type="evidence" value="ECO:0007669"/>
    <property type="project" value="UniProtKB-KW"/>
</dbReference>
<dbReference type="GO" id="GO:0003723">
    <property type="term" value="F:RNA binding"/>
    <property type="evidence" value="ECO:0000318"/>
    <property type="project" value="GO_Central"/>
</dbReference>
<dbReference type="GO" id="GO:0000480">
    <property type="term" value="P:endonucleolytic cleavage in 5'-ETS of tricistronic rRNA transcript (SSU-rRNA, 5.8S rRNA, LSU-rRNA)"/>
    <property type="evidence" value="ECO:0000318"/>
    <property type="project" value="GO_Central"/>
</dbReference>
<dbReference type="GO" id="GO:0000447">
    <property type="term" value="P:endonucleolytic cleavage in ITS1 to separate SSU-rRNA from 5.8S rRNA and LSU-rRNA from tricistronic rRNA transcript (SSU-rRNA, 5.8S rRNA, LSU-rRNA)"/>
    <property type="evidence" value="ECO:0000318"/>
    <property type="project" value="GO_Central"/>
</dbReference>
<dbReference type="GO" id="GO:0000472">
    <property type="term" value="P:endonucleolytic cleavage to generate mature 5'-end of SSU-rRNA from (SSU-rRNA, 5.8S rRNA, LSU-rRNA)"/>
    <property type="evidence" value="ECO:0000318"/>
    <property type="project" value="GO_Central"/>
</dbReference>
<dbReference type="GO" id="GO:0006357">
    <property type="term" value="P:regulation of transcription by RNA polymerase II"/>
    <property type="evidence" value="ECO:0000266"/>
    <property type="project" value="RGD"/>
</dbReference>
<dbReference type="GO" id="GO:0034462">
    <property type="term" value="P:small-subunit processome assembly"/>
    <property type="evidence" value="ECO:0000318"/>
    <property type="project" value="GO_Central"/>
</dbReference>
<dbReference type="GO" id="GO:0021522">
    <property type="term" value="P:spinal cord motor neuron differentiation"/>
    <property type="evidence" value="ECO:0000266"/>
    <property type="project" value="RGD"/>
</dbReference>
<dbReference type="CDD" id="cd12263">
    <property type="entry name" value="RRM_ABT1_like"/>
    <property type="match status" value="1"/>
</dbReference>
<dbReference type="FunFam" id="3.30.70.330:FF:000447">
    <property type="entry name" value="Activator of basal transcription 1"/>
    <property type="match status" value="1"/>
</dbReference>
<dbReference type="Gene3D" id="3.30.70.330">
    <property type="match status" value="1"/>
</dbReference>
<dbReference type="InterPro" id="IPR039119">
    <property type="entry name" value="ABT1/Esf2"/>
</dbReference>
<dbReference type="InterPro" id="IPR034353">
    <property type="entry name" value="ABT1/ESF2_RRM"/>
</dbReference>
<dbReference type="InterPro" id="IPR012677">
    <property type="entry name" value="Nucleotide-bd_a/b_plait_sf"/>
</dbReference>
<dbReference type="InterPro" id="IPR035979">
    <property type="entry name" value="RBD_domain_sf"/>
</dbReference>
<dbReference type="PANTHER" id="PTHR12311">
    <property type="entry name" value="ACTIVATOR OF BASAL TRANSCRIPTION 1"/>
    <property type="match status" value="1"/>
</dbReference>
<dbReference type="PANTHER" id="PTHR12311:SF7">
    <property type="entry name" value="ACTIVATOR OF BASAL TRANSCRIPTION 1"/>
    <property type="match status" value="1"/>
</dbReference>
<dbReference type="SUPFAM" id="SSF54928">
    <property type="entry name" value="RNA-binding domain, RBD"/>
    <property type="match status" value="1"/>
</dbReference>
<protein>
    <recommendedName>
        <fullName>Activator of basal transcription 1</fullName>
    </recommendedName>
</protein>
<feature type="chain" id="PRO_0000233171" description="Activator of basal transcription 1">
    <location>
        <begin position="1"/>
        <end position="268"/>
    </location>
</feature>
<feature type="domain" description="RRM">
    <location>
        <begin position="47"/>
        <end position="144"/>
    </location>
</feature>
<feature type="region of interest" description="Disordered" evidence="3">
    <location>
        <begin position="200"/>
        <end position="242"/>
    </location>
</feature>
<feature type="coiled-coil region" evidence="2">
    <location>
        <begin position="6"/>
        <end position="38"/>
    </location>
</feature>
<feature type="coiled-coil region" evidence="2">
    <location>
        <begin position="163"/>
        <end position="193"/>
    </location>
</feature>
<feature type="compositionally biased region" description="Polar residues" evidence="3">
    <location>
        <begin position="206"/>
        <end position="217"/>
    </location>
</feature>
<organism>
    <name type="scientific">Rattus norvegicus</name>
    <name type="common">Rat</name>
    <dbReference type="NCBI Taxonomy" id="10116"/>
    <lineage>
        <taxon>Eukaryota</taxon>
        <taxon>Metazoa</taxon>
        <taxon>Chordata</taxon>
        <taxon>Craniata</taxon>
        <taxon>Vertebrata</taxon>
        <taxon>Euteleostomi</taxon>
        <taxon>Mammalia</taxon>
        <taxon>Eutheria</taxon>
        <taxon>Euarchontoglires</taxon>
        <taxon>Glires</taxon>
        <taxon>Rodentia</taxon>
        <taxon>Myomorpha</taxon>
        <taxon>Muroidea</taxon>
        <taxon>Muridae</taxon>
        <taxon>Murinae</taxon>
        <taxon>Rattus</taxon>
    </lineage>
</organism>
<evidence type="ECO:0000250" key="1"/>
<evidence type="ECO:0000255" key="2"/>
<evidence type="ECO:0000256" key="3">
    <source>
        <dbReference type="SAM" id="MobiDB-lite"/>
    </source>
</evidence>
<evidence type="ECO:0000269" key="4">
    <source>
    </source>
</evidence>
<evidence type="ECO:0000305" key="5"/>
<accession>Q4KLM5</accession>